<organism>
    <name type="scientific">Haemophilus influenzae (strain 86-028NP)</name>
    <dbReference type="NCBI Taxonomy" id="281310"/>
    <lineage>
        <taxon>Bacteria</taxon>
        <taxon>Pseudomonadati</taxon>
        <taxon>Pseudomonadota</taxon>
        <taxon>Gammaproteobacteria</taxon>
        <taxon>Pasteurellales</taxon>
        <taxon>Pasteurellaceae</taxon>
        <taxon>Haemophilus</taxon>
    </lineage>
</organism>
<proteinExistence type="inferred from homology"/>
<reference key="1">
    <citation type="journal article" date="2005" name="J. Bacteriol.">
        <title>Genomic sequence of an otitis media isolate of nontypeable Haemophilus influenzae: comparative study with H. influenzae serotype d, strain KW20.</title>
        <authorList>
            <person name="Harrison A."/>
            <person name="Dyer D.W."/>
            <person name="Gillaspy A."/>
            <person name="Ray W.C."/>
            <person name="Mungur R."/>
            <person name="Carson M.B."/>
            <person name="Zhong H."/>
            <person name="Gipson J."/>
            <person name="Gipson M."/>
            <person name="Johnson L.S."/>
            <person name="Lewis L."/>
            <person name="Bakaletz L.O."/>
            <person name="Munson R.S. Jr."/>
        </authorList>
    </citation>
    <scope>NUCLEOTIDE SEQUENCE [LARGE SCALE GENOMIC DNA]</scope>
    <source>
        <strain>86-028NP</strain>
    </source>
</reference>
<feature type="chain" id="PRO_0000109679" description="Glutamate 5-kinase">
    <location>
        <begin position="1"/>
        <end position="368"/>
    </location>
</feature>
<feature type="domain" description="PUA" evidence="1">
    <location>
        <begin position="275"/>
        <end position="353"/>
    </location>
</feature>
<feature type="binding site" evidence="1">
    <location>
        <position position="9"/>
    </location>
    <ligand>
        <name>ATP</name>
        <dbReference type="ChEBI" id="CHEBI:30616"/>
    </ligand>
</feature>
<feature type="binding site" evidence="1">
    <location>
        <position position="49"/>
    </location>
    <ligand>
        <name>substrate</name>
    </ligand>
</feature>
<feature type="binding site" evidence="1">
    <location>
        <position position="136"/>
    </location>
    <ligand>
        <name>substrate</name>
    </ligand>
</feature>
<feature type="binding site" evidence="1">
    <location>
        <position position="148"/>
    </location>
    <ligand>
        <name>substrate</name>
    </ligand>
</feature>
<feature type="binding site" evidence="1">
    <location>
        <begin position="168"/>
        <end position="169"/>
    </location>
    <ligand>
        <name>ATP</name>
        <dbReference type="ChEBI" id="CHEBI:30616"/>
    </ligand>
</feature>
<feature type="binding site" evidence="1">
    <location>
        <begin position="210"/>
        <end position="216"/>
    </location>
    <ligand>
        <name>ATP</name>
        <dbReference type="ChEBI" id="CHEBI:30616"/>
    </ligand>
</feature>
<sequence length="368" mass="40084">MNKKTIVVKFGTSTLTQGSPKLNSPHMMEIVRQIAQLHNDGFRIVIVTSGAIAAGRHYLNHPQLPPTIASKQLLAAVGQSQLIQAWEKLFAIYDIHIGQLLLTRADIEDRERFLNARDTLHALLDNHIIPVINENDAVATAEIKVGDNDNLSALVAILVQAEQLYLLTDQQGLFDSDPRKNPEAKLIPVVEQITDHIRSIAGGSGTNLGTGGMMTKIIAADVATRSGIETIIAPGNRPNVIADLAYEQNIGTKFIAHQSDRLESRKQWLFAAPSAGIITIDDGAKNAILEQNKSLLPAGIINVEGRFSRGEVVKICTQSGKDIVLGMPRYNSDALQLIKGRKSADIENVLGYEYGAVAMHRDDMIILS</sequence>
<dbReference type="EC" id="2.7.2.11" evidence="1"/>
<dbReference type="EMBL" id="CP000057">
    <property type="protein sequence ID" value="AAX87939.1"/>
    <property type="molecule type" value="Genomic_DNA"/>
</dbReference>
<dbReference type="RefSeq" id="WP_011272275.1">
    <property type="nucleotide sequence ID" value="NC_007146.2"/>
</dbReference>
<dbReference type="SMR" id="Q4QM08"/>
<dbReference type="KEGG" id="hit:NTHI1066"/>
<dbReference type="HOGENOM" id="CLU_025400_2_0_6"/>
<dbReference type="UniPathway" id="UPA00098">
    <property type="reaction ID" value="UER00359"/>
</dbReference>
<dbReference type="Proteomes" id="UP000002525">
    <property type="component" value="Chromosome"/>
</dbReference>
<dbReference type="GO" id="GO:0005829">
    <property type="term" value="C:cytosol"/>
    <property type="evidence" value="ECO:0007669"/>
    <property type="project" value="TreeGrafter"/>
</dbReference>
<dbReference type="GO" id="GO:0005524">
    <property type="term" value="F:ATP binding"/>
    <property type="evidence" value="ECO:0007669"/>
    <property type="project" value="UniProtKB-KW"/>
</dbReference>
<dbReference type="GO" id="GO:0004349">
    <property type="term" value="F:glutamate 5-kinase activity"/>
    <property type="evidence" value="ECO:0007669"/>
    <property type="project" value="UniProtKB-UniRule"/>
</dbReference>
<dbReference type="GO" id="GO:0003723">
    <property type="term" value="F:RNA binding"/>
    <property type="evidence" value="ECO:0007669"/>
    <property type="project" value="InterPro"/>
</dbReference>
<dbReference type="GO" id="GO:0055129">
    <property type="term" value="P:L-proline biosynthetic process"/>
    <property type="evidence" value="ECO:0007669"/>
    <property type="project" value="UniProtKB-UniRule"/>
</dbReference>
<dbReference type="CDD" id="cd04242">
    <property type="entry name" value="AAK_G5K_ProB"/>
    <property type="match status" value="1"/>
</dbReference>
<dbReference type="CDD" id="cd21157">
    <property type="entry name" value="PUA_G5K"/>
    <property type="match status" value="1"/>
</dbReference>
<dbReference type="FunFam" id="2.30.130.10:FF:000003">
    <property type="entry name" value="Glutamate 5-kinase"/>
    <property type="match status" value="1"/>
</dbReference>
<dbReference type="FunFam" id="3.40.1160.10:FF:000006">
    <property type="entry name" value="Glutamate 5-kinase"/>
    <property type="match status" value="1"/>
</dbReference>
<dbReference type="Gene3D" id="3.40.1160.10">
    <property type="entry name" value="Acetylglutamate kinase-like"/>
    <property type="match status" value="2"/>
</dbReference>
<dbReference type="Gene3D" id="2.30.130.10">
    <property type="entry name" value="PUA domain"/>
    <property type="match status" value="1"/>
</dbReference>
<dbReference type="HAMAP" id="MF_00456">
    <property type="entry name" value="ProB"/>
    <property type="match status" value="1"/>
</dbReference>
<dbReference type="InterPro" id="IPR036393">
    <property type="entry name" value="AceGlu_kinase-like_sf"/>
</dbReference>
<dbReference type="InterPro" id="IPR001048">
    <property type="entry name" value="Asp/Glu/Uridylate_kinase"/>
</dbReference>
<dbReference type="InterPro" id="IPR041739">
    <property type="entry name" value="G5K_ProB"/>
</dbReference>
<dbReference type="InterPro" id="IPR001057">
    <property type="entry name" value="Glu/AcGlu_kinase"/>
</dbReference>
<dbReference type="InterPro" id="IPR011529">
    <property type="entry name" value="Glu_5kinase"/>
</dbReference>
<dbReference type="InterPro" id="IPR005715">
    <property type="entry name" value="Glu_5kinase/COase_Synthase"/>
</dbReference>
<dbReference type="InterPro" id="IPR019797">
    <property type="entry name" value="Glutamate_5-kinase_CS"/>
</dbReference>
<dbReference type="InterPro" id="IPR002478">
    <property type="entry name" value="PUA"/>
</dbReference>
<dbReference type="InterPro" id="IPR015947">
    <property type="entry name" value="PUA-like_sf"/>
</dbReference>
<dbReference type="InterPro" id="IPR036974">
    <property type="entry name" value="PUA_sf"/>
</dbReference>
<dbReference type="NCBIfam" id="TIGR01027">
    <property type="entry name" value="proB"/>
    <property type="match status" value="1"/>
</dbReference>
<dbReference type="PANTHER" id="PTHR43654">
    <property type="entry name" value="GLUTAMATE 5-KINASE"/>
    <property type="match status" value="1"/>
</dbReference>
<dbReference type="PANTHER" id="PTHR43654:SF1">
    <property type="entry name" value="ISOPENTENYL PHOSPHATE KINASE"/>
    <property type="match status" value="1"/>
</dbReference>
<dbReference type="Pfam" id="PF00696">
    <property type="entry name" value="AA_kinase"/>
    <property type="match status" value="1"/>
</dbReference>
<dbReference type="Pfam" id="PF01472">
    <property type="entry name" value="PUA"/>
    <property type="match status" value="1"/>
</dbReference>
<dbReference type="PIRSF" id="PIRSF000729">
    <property type="entry name" value="GK"/>
    <property type="match status" value="1"/>
</dbReference>
<dbReference type="PRINTS" id="PR00474">
    <property type="entry name" value="GLU5KINASE"/>
</dbReference>
<dbReference type="SMART" id="SM00359">
    <property type="entry name" value="PUA"/>
    <property type="match status" value="1"/>
</dbReference>
<dbReference type="SUPFAM" id="SSF53633">
    <property type="entry name" value="Carbamate kinase-like"/>
    <property type="match status" value="1"/>
</dbReference>
<dbReference type="SUPFAM" id="SSF88697">
    <property type="entry name" value="PUA domain-like"/>
    <property type="match status" value="1"/>
</dbReference>
<dbReference type="PROSITE" id="PS00902">
    <property type="entry name" value="GLUTAMATE_5_KINASE"/>
    <property type="match status" value="1"/>
</dbReference>
<dbReference type="PROSITE" id="PS50890">
    <property type="entry name" value="PUA"/>
    <property type="match status" value="1"/>
</dbReference>
<comment type="function">
    <text evidence="1">Catalyzes the transfer of a phosphate group to glutamate to form L-glutamate 5-phosphate.</text>
</comment>
<comment type="catalytic activity">
    <reaction evidence="1">
        <text>L-glutamate + ATP = L-glutamyl 5-phosphate + ADP</text>
        <dbReference type="Rhea" id="RHEA:14877"/>
        <dbReference type="ChEBI" id="CHEBI:29985"/>
        <dbReference type="ChEBI" id="CHEBI:30616"/>
        <dbReference type="ChEBI" id="CHEBI:58274"/>
        <dbReference type="ChEBI" id="CHEBI:456216"/>
        <dbReference type="EC" id="2.7.2.11"/>
    </reaction>
</comment>
<comment type="pathway">
    <text evidence="1">Amino-acid biosynthesis; L-proline biosynthesis; L-glutamate 5-semialdehyde from L-glutamate: step 1/2.</text>
</comment>
<comment type="subcellular location">
    <subcellularLocation>
        <location evidence="1">Cytoplasm</location>
    </subcellularLocation>
</comment>
<comment type="similarity">
    <text evidence="1">Belongs to the glutamate 5-kinase family.</text>
</comment>
<evidence type="ECO:0000255" key="1">
    <source>
        <dbReference type="HAMAP-Rule" id="MF_00456"/>
    </source>
</evidence>
<accession>Q4QM08</accession>
<protein>
    <recommendedName>
        <fullName evidence="1">Glutamate 5-kinase</fullName>
        <ecNumber evidence="1">2.7.2.11</ecNumber>
    </recommendedName>
    <alternativeName>
        <fullName evidence="1">Gamma-glutamyl kinase</fullName>
        <shortName evidence="1">GK</shortName>
    </alternativeName>
</protein>
<name>PROB_HAEI8</name>
<keyword id="KW-0028">Amino-acid biosynthesis</keyword>
<keyword id="KW-0067">ATP-binding</keyword>
<keyword id="KW-0963">Cytoplasm</keyword>
<keyword id="KW-0418">Kinase</keyword>
<keyword id="KW-0547">Nucleotide-binding</keyword>
<keyword id="KW-0641">Proline biosynthesis</keyword>
<keyword id="KW-0808">Transferase</keyword>
<gene>
    <name evidence="1" type="primary">proB</name>
    <name type="ordered locus">NTHI1066</name>
</gene>